<dbReference type="EC" id="4.2.1.33" evidence="1"/>
<dbReference type="EMBL" id="CP000930">
    <property type="protein sequence ID" value="ABZ84088.1"/>
    <property type="molecule type" value="Genomic_DNA"/>
</dbReference>
<dbReference type="RefSeq" id="WP_012282602.1">
    <property type="nucleotide sequence ID" value="NC_010337.2"/>
</dbReference>
<dbReference type="SMR" id="B0TCR2"/>
<dbReference type="STRING" id="498761.HM1_1516"/>
<dbReference type="KEGG" id="hmo:HM1_1516"/>
<dbReference type="eggNOG" id="COG0065">
    <property type="taxonomic scope" value="Bacteria"/>
</dbReference>
<dbReference type="HOGENOM" id="CLU_006714_3_4_9"/>
<dbReference type="OrthoDB" id="9764318at2"/>
<dbReference type="UniPathway" id="UPA00048">
    <property type="reaction ID" value="UER00071"/>
</dbReference>
<dbReference type="Proteomes" id="UP000008550">
    <property type="component" value="Chromosome"/>
</dbReference>
<dbReference type="GO" id="GO:0003861">
    <property type="term" value="F:3-isopropylmalate dehydratase activity"/>
    <property type="evidence" value="ECO:0007669"/>
    <property type="project" value="UniProtKB-UniRule"/>
</dbReference>
<dbReference type="GO" id="GO:0051539">
    <property type="term" value="F:4 iron, 4 sulfur cluster binding"/>
    <property type="evidence" value="ECO:0007669"/>
    <property type="project" value="UniProtKB-KW"/>
</dbReference>
<dbReference type="GO" id="GO:0046872">
    <property type="term" value="F:metal ion binding"/>
    <property type="evidence" value="ECO:0007669"/>
    <property type="project" value="UniProtKB-KW"/>
</dbReference>
<dbReference type="GO" id="GO:0009098">
    <property type="term" value="P:L-leucine biosynthetic process"/>
    <property type="evidence" value="ECO:0007669"/>
    <property type="project" value="UniProtKB-UniRule"/>
</dbReference>
<dbReference type="CDD" id="cd01583">
    <property type="entry name" value="IPMI"/>
    <property type="match status" value="1"/>
</dbReference>
<dbReference type="Gene3D" id="3.30.499.10">
    <property type="entry name" value="Aconitase, domain 3"/>
    <property type="match status" value="2"/>
</dbReference>
<dbReference type="HAMAP" id="MF_01027">
    <property type="entry name" value="LeuC_type2"/>
    <property type="match status" value="1"/>
</dbReference>
<dbReference type="InterPro" id="IPR015931">
    <property type="entry name" value="Acnase/IPM_dHydase_lsu_aba_1/3"/>
</dbReference>
<dbReference type="InterPro" id="IPR001030">
    <property type="entry name" value="Acoase/IPM_deHydtase_lsu_aba"/>
</dbReference>
<dbReference type="InterPro" id="IPR018136">
    <property type="entry name" value="Aconitase_4Fe-4S_BS"/>
</dbReference>
<dbReference type="InterPro" id="IPR036008">
    <property type="entry name" value="Aconitase_4Fe-4S_dom"/>
</dbReference>
<dbReference type="InterPro" id="IPR011826">
    <property type="entry name" value="HAcnase/IPMdehydase_lsu_prok"/>
</dbReference>
<dbReference type="InterPro" id="IPR006251">
    <property type="entry name" value="Homoacnase/IPMdehydase_lsu"/>
</dbReference>
<dbReference type="InterPro" id="IPR050067">
    <property type="entry name" value="IPM_dehydratase_rel_enz"/>
</dbReference>
<dbReference type="InterPro" id="IPR033941">
    <property type="entry name" value="IPMI_cat"/>
</dbReference>
<dbReference type="InterPro" id="IPR011823">
    <property type="entry name" value="IsopropMal_deHydtase_lsu_bac"/>
</dbReference>
<dbReference type="NCBIfam" id="TIGR01343">
    <property type="entry name" value="hacA_fam"/>
    <property type="match status" value="1"/>
</dbReference>
<dbReference type="NCBIfam" id="TIGR02086">
    <property type="entry name" value="IPMI_arch"/>
    <property type="match status" value="1"/>
</dbReference>
<dbReference type="NCBIfam" id="TIGR02083">
    <property type="entry name" value="LEU2"/>
    <property type="match status" value="1"/>
</dbReference>
<dbReference type="NCBIfam" id="NF001614">
    <property type="entry name" value="PRK00402.1"/>
    <property type="match status" value="1"/>
</dbReference>
<dbReference type="PANTHER" id="PTHR43822:SF16">
    <property type="entry name" value="3-ISOPROPYLMALATE DEHYDRATASE LARGE SUBUNIT 2"/>
    <property type="match status" value="1"/>
</dbReference>
<dbReference type="PANTHER" id="PTHR43822">
    <property type="entry name" value="HOMOACONITASE, MITOCHONDRIAL-RELATED"/>
    <property type="match status" value="1"/>
</dbReference>
<dbReference type="Pfam" id="PF00330">
    <property type="entry name" value="Aconitase"/>
    <property type="match status" value="2"/>
</dbReference>
<dbReference type="PRINTS" id="PR00415">
    <property type="entry name" value="ACONITASE"/>
</dbReference>
<dbReference type="SUPFAM" id="SSF53732">
    <property type="entry name" value="Aconitase iron-sulfur domain"/>
    <property type="match status" value="1"/>
</dbReference>
<dbReference type="PROSITE" id="PS00450">
    <property type="entry name" value="ACONITASE_1"/>
    <property type="match status" value="1"/>
</dbReference>
<dbReference type="PROSITE" id="PS01244">
    <property type="entry name" value="ACONITASE_2"/>
    <property type="match status" value="1"/>
</dbReference>
<name>LEUC_HELMI</name>
<proteinExistence type="inferred from homology"/>
<protein>
    <recommendedName>
        <fullName evidence="1">3-isopropylmalate dehydratase large subunit</fullName>
        <ecNumber evidence="1">4.2.1.33</ecNumber>
    </recommendedName>
    <alternativeName>
        <fullName evidence="1">Alpha-IPM isomerase</fullName>
        <shortName evidence="1">IPMI</shortName>
    </alternativeName>
    <alternativeName>
        <fullName evidence="1">Isopropylmalate isomerase</fullName>
    </alternativeName>
</protein>
<gene>
    <name evidence="1" type="primary">leuC</name>
    <name type="ordered locus">Helmi_14630</name>
    <name type="ORF">HM1_1516</name>
</gene>
<reference key="1">
    <citation type="journal article" date="2008" name="J. Bacteriol.">
        <title>The genome of Heliobacterium modesticaldum, a phototrophic representative of the Firmicutes containing the simplest photosynthetic apparatus.</title>
        <authorList>
            <person name="Sattley W.M."/>
            <person name="Madigan M.T."/>
            <person name="Swingley W.D."/>
            <person name="Cheung P.C."/>
            <person name="Clocksin K.M."/>
            <person name="Conrad A.L."/>
            <person name="Dejesa L.C."/>
            <person name="Honchak B.M."/>
            <person name="Jung D.O."/>
            <person name="Karbach L.E."/>
            <person name="Kurdoglu A."/>
            <person name="Lahiri S."/>
            <person name="Mastrian S.D."/>
            <person name="Page L.E."/>
            <person name="Taylor H.L."/>
            <person name="Wang Z.T."/>
            <person name="Raymond J."/>
            <person name="Chen M."/>
            <person name="Blankenship R.E."/>
            <person name="Touchman J.W."/>
        </authorList>
    </citation>
    <scope>NUCLEOTIDE SEQUENCE [LARGE SCALE GENOMIC DNA]</scope>
    <source>
        <strain>ATCC 51547 / Ice1</strain>
    </source>
</reference>
<organism>
    <name type="scientific">Heliobacterium modesticaldum (strain ATCC 51547 / Ice1)</name>
    <dbReference type="NCBI Taxonomy" id="498761"/>
    <lineage>
        <taxon>Bacteria</taxon>
        <taxon>Bacillati</taxon>
        <taxon>Bacillota</taxon>
        <taxon>Clostridia</taxon>
        <taxon>Eubacteriales</taxon>
        <taxon>Heliobacteriaceae</taxon>
        <taxon>Heliomicrobium</taxon>
    </lineage>
</organism>
<evidence type="ECO:0000255" key="1">
    <source>
        <dbReference type="HAMAP-Rule" id="MF_01027"/>
    </source>
</evidence>
<sequence>MGMTITEKILAAHAGKASVEPGELIQAKLDLVLANDVTAPVSIKELEKASLDAVFDKERVVLVQDHFVPAKDIKSAEQSKIVRDFARKHDITHHYDVGDMGIEHCLLPEKGLVVPGDAVIGADSHTCTYGALGAFATGVGSTDLAAGIALGEAWFKVPEAIKFEYEGKLPEDVTGKDLILHTIGDIGVDGALYQSMEFTGSAIDDLSMDGRMTMCNMAIEAGGKNGIIAPDKKTIAYVEERATRPYKVYTSDPDAKYARVIKYDVEKLEPVVAFPHLPENTRPVSEAGHVEIDQVVIGSCTNGRIEDLRMAAKILQGKKVHKNVRCIIFPGTQAIYKQAIKEGLIDIFIDAGAAVSTPTCGPCLGGHMGILAKGERALATTNRNFVGRMGHPESEVYLCGPNVAAASAIAGRIVHPREVE</sequence>
<accession>B0TCR2</accession>
<keyword id="KW-0004">4Fe-4S</keyword>
<keyword id="KW-0028">Amino-acid biosynthesis</keyword>
<keyword id="KW-0100">Branched-chain amino acid biosynthesis</keyword>
<keyword id="KW-0408">Iron</keyword>
<keyword id="KW-0411">Iron-sulfur</keyword>
<keyword id="KW-0432">Leucine biosynthesis</keyword>
<keyword id="KW-0456">Lyase</keyword>
<keyword id="KW-0479">Metal-binding</keyword>
<keyword id="KW-1185">Reference proteome</keyword>
<feature type="chain" id="PRO_1000135733" description="3-isopropylmalate dehydratase large subunit">
    <location>
        <begin position="1"/>
        <end position="420"/>
    </location>
</feature>
<feature type="binding site" evidence="1">
    <location>
        <position position="300"/>
    </location>
    <ligand>
        <name>[4Fe-4S] cluster</name>
        <dbReference type="ChEBI" id="CHEBI:49883"/>
    </ligand>
</feature>
<feature type="binding site" evidence="1">
    <location>
        <position position="360"/>
    </location>
    <ligand>
        <name>[4Fe-4S] cluster</name>
        <dbReference type="ChEBI" id="CHEBI:49883"/>
    </ligand>
</feature>
<feature type="binding site" evidence="1">
    <location>
        <position position="363"/>
    </location>
    <ligand>
        <name>[4Fe-4S] cluster</name>
        <dbReference type="ChEBI" id="CHEBI:49883"/>
    </ligand>
</feature>
<comment type="function">
    <text evidence="1">Catalyzes the isomerization between 2-isopropylmalate and 3-isopropylmalate, via the formation of 2-isopropylmaleate.</text>
</comment>
<comment type="catalytic activity">
    <reaction evidence="1">
        <text>(2R,3S)-3-isopropylmalate = (2S)-2-isopropylmalate</text>
        <dbReference type="Rhea" id="RHEA:32287"/>
        <dbReference type="ChEBI" id="CHEBI:1178"/>
        <dbReference type="ChEBI" id="CHEBI:35121"/>
        <dbReference type="EC" id="4.2.1.33"/>
    </reaction>
</comment>
<comment type="cofactor">
    <cofactor evidence="1">
        <name>[4Fe-4S] cluster</name>
        <dbReference type="ChEBI" id="CHEBI:49883"/>
    </cofactor>
    <text evidence="1">Binds 1 [4Fe-4S] cluster per subunit.</text>
</comment>
<comment type="pathway">
    <text evidence="1">Amino-acid biosynthesis; L-leucine biosynthesis; L-leucine from 3-methyl-2-oxobutanoate: step 2/4.</text>
</comment>
<comment type="subunit">
    <text evidence="1">Heterodimer of LeuC and LeuD.</text>
</comment>
<comment type="similarity">
    <text evidence="1">Belongs to the aconitase/IPM isomerase family. LeuC type 2 subfamily.</text>
</comment>